<organism>
    <name type="scientific">Salmonella agona (strain SL483)</name>
    <dbReference type="NCBI Taxonomy" id="454166"/>
    <lineage>
        <taxon>Bacteria</taxon>
        <taxon>Pseudomonadati</taxon>
        <taxon>Pseudomonadota</taxon>
        <taxon>Gammaproteobacteria</taxon>
        <taxon>Enterobacterales</taxon>
        <taxon>Enterobacteriaceae</taxon>
        <taxon>Salmonella</taxon>
    </lineage>
</organism>
<accession>B5F0P5</accession>
<sequence length="300" mass="32968">MNQTYGRLVSRAAIAATAMASALLLIKILAWWYTGSVSILAALVDSLVDIAASLTNLLVVRYSLQPADDEHTFGHGKAESLAALAQSMFISGSALFLFLTSIQNLIKPTPMNDPGVGIGVTVIALICTIILVTFQRWVVRKTQSQAVRADMLHYQSDVMMNGAILIALGLSWYGWHRADALFALGIGIYILYSALRMGYEAVQSLLDRALPDAERQEIIDIVTSWPGVSGAHDLRTRQSGPTRFIQIHLEMEDNLPLVQAHFVADQVEQAILRRFPGSDVIIHQDPCSVVPREGRKFELV</sequence>
<gene>
    <name evidence="1" type="primary">fieF</name>
    <name type="ordered locus">SeAg_B4307</name>
</gene>
<proteinExistence type="inferred from homology"/>
<evidence type="ECO:0000255" key="1">
    <source>
        <dbReference type="HAMAP-Rule" id="MF_01425"/>
    </source>
</evidence>
<keyword id="KW-0997">Cell inner membrane</keyword>
<keyword id="KW-1003">Cell membrane</keyword>
<keyword id="KW-0406">Ion transport</keyword>
<keyword id="KW-0408">Iron</keyword>
<keyword id="KW-0410">Iron transport</keyword>
<keyword id="KW-0472">Membrane</keyword>
<keyword id="KW-0479">Metal-binding</keyword>
<keyword id="KW-0812">Transmembrane</keyword>
<keyword id="KW-1133">Transmembrane helix</keyword>
<keyword id="KW-0813">Transport</keyword>
<keyword id="KW-0862">Zinc</keyword>
<keyword id="KW-0864">Zinc transport</keyword>
<feature type="chain" id="PRO_1000145699" description="Cation-efflux pump FieF">
    <location>
        <begin position="1"/>
        <end position="300"/>
    </location>
</feature>
<feature type="transmembrane region" description="Helical" evidence="1">
    <location>
        <begin position="24"/>
        <end position="44"/>
    </location>
</feature>
<feature type="transmembrane region" description="Helical" evidence="1">
    <location>
        <begin position="82"/>
        <end position="102"/>
    </location>
</feature>
<feature type="transmembrane region" description="Helical" evidence="1">
    <location>
        <begin position="114"/>
        <end position="134"/>
    </location>
</feature>
<feature type="transmembrane region" description="Helical" evidence="1">
    <location>
        <begin position="156"/>
        <end position="176"/>
    </location>
</feature>
<feature type="transmembrane region" description="Helical" evidence="1">
    <location>
        <begin position="178"/>
        <end position="198"/>
    </location>
</feature>
<feature type="binding site" evidence="1">
    <location>
        <position position="45"/>
    </location>
    <ligand>
        <name>Zn(2+)</name>
        <dbReference type="ChEBI" id="CHEBI:29105"/>
    </ligand>
</feature>
<feature type="binding site" evidence="1">
    <location>
        <position position="49"/>
    </location>
    <ligand>
        <name>Zn(2+)</name>
        <dbReference type="ChEBI" id="CHEBI:29105"/>
    </ligand>
</feature>
<feature type="binding site" evidence="1">
    <location>
        <position position="153"/>
    </location>
    <ligand>
        <name>Zn(2+)</name>
        <dbReference type="ChEBI" id="CHEBI:29105"/>
    </ligand>
</feature>
<feature type="binding site" evidence="1">
    <location>
        <position position="157"/>
    </location>
    <ligand>
        <name>Zn(2+)</name>
        <dbReference type="ChEBI" id="CHEBI:29105"/>
    </ligand>
</feature>
<name>FIEF_SALA4</name>
<comment type="function">
    <text evidence="1">Divalent metal cation transporter which exports Zn(2+), Cd(2+) and possibly Fe(2+). May be involved in zinc and iron detoxification by efflux.</text>
</comment>
<comment type="catalytic activity">
    <reaction evidence="1">
        <text>Zn(2+)(in) + H(+)(out) = Zn(2+)(out) + H(+)(in)</text>
        <dbReference type="Rhea" id="RHEA:28839"/>
        <dbReference type="ChEBI" id="CHEBI:15378"/>
        <dbReference type="ChEBI" id="CHEBI:29105"/>
    </reaction>
</comment>
<comment type="catalytic activity">
    <reaction evidence="1">
        <text>Cd(2+)(in) + H(+)(out) = Cd(2+)(out) + H(+)(in)</text>
        <dbReference type="Rhea" id="RHEA:28739"/>
        <dbReference type="ChEBI" id="CHEBI:15378"/>
        <dbReference type="ChEBI" id="CHEBI:48775"/>
    </reaction>
</comment>
<comment type="catalytic activity">
    <reaction evidence="1">
        <text>Fe(2+)(in) + H(+)(out) = Fe(2+)(out) + H(+)(in)</text>
        <dbReference type="Rhea" id="RHEA:29439"/>
        <dbReference type="ChEBI" id="CHEBI:15378"/>
        <dbReference type="ChEBI" id="CHEBI:29033"/>
    </reaction>
</comment>
<comment type="subunit">
    <text evidence="1">Homodimer.</text>
</comment>
<comment type="subcellular location">
    <subcellularLocation>
        <location evidence="1">Cell inner membrane</location>
        <topology evidence="1">Multi-pass membrane protein</topology>
    </subcellularLocation>
</comment>
<comment type="similarity">
    <text evidence="1">Belongs to the cation diffusion facilitator (CDF) transporter (TC 2.A.4) family. FieF subfamily.</text>
</comment>
<protein>
    <recommendedName>
        <fullName evidence="1">Cation-efflux pump FieF</fullName>
    </recommendedName>
</protein>
<dbReference type="EMBL" id="CP001138">
    <property type="protein sequence ID" value="ACH48933.1"/>
    <property type="molecule type" value="Genomic_DNA"/>
</dbReference>
<dbReference type="RefSeq" id="WP_001077325.1">
    <property type="nucleotide sequence ID" value="NC_011149.1"/>
</dbReference>
<dbReference type="SMR" id="B5F0P5"/>
<dbReference type="KEGG" id="sea:SeAg_B4307"/>
<dbReference type="HOGENOM" id="CLU_013430_3_0_6"/>
<dbReference type="Proteomes" id="UP000008819">
    <property type="component" value="Chromosome"/>
</dbReference>
<dbReference type="GO" id="GO:0005886">
    <property type="term" value="C:plasma membrane"/>
    <property type="evidence" value="ECO:0007669"/>
    <property type="project" value="UniProtKB-SubCell"/>
</dbReference>
<dbReference type="GO" id="GO:0015086">
    <property type="term" value="F:cadmium ion transmembrane transporter activity"/>
    <property type="evidence" value="ECO:0007669"/>
    <property type="project" value="UniProtKB-UniRule"/>
</dbReference>
<dbReference type="GO" id="GO:0015093">
    <property type="term" value="F:ferrous iron transmembrane transporter activity"/>
    <property type="evidence" value="ECO:0007669"/>
    <property type="project" value="TreeGrafter"/>
</dbReference>
<dbReference type="GO" id="GO:0046872">
    <property type="term" value="F:metal ion binding"/>
    <property type="evidence" value="ECO:0007669"/>
    <property type="project" value="UniProtKB-KW"/>
</dbReference>
<dbReference type="GO" id="GO:0015341">
    <property type="term" value="F:zinc efflux antiporter activity"/>
    <property type="evidence" value="ECO:0007669"/>
    <property type="project" value="TreeGrafter"/>
</dbReference>
<dbReference type="GO" id="GO:0006882">
    <property type="term" value="P:intracellular zinc ion homeostasis"/>
    <property type="evidence" value="ECO:0007669"/>
    <property type="project" value="TreeGrafter"/>
</dbReference>
<dbReference type="FunFam" id="1.20.1510.10:FF:000001">
    <property type="entry name" value="Ferrous-iron efflux pump FieF"/>
    <property type="match status" value="1"/>
</dbReference>
<dbReference type="FunFam" id="3.30.70.1350:FF:000002">
    <property type="entry name" value="Ferrous-iron efflux pump FieF"/>
    <property type="match status" value="1"/>
</dbReference>
<dbReference type="Gene3D" id="1.20.1510.10">
    <property type="entry name" value="Cation efflux protein transmembrane domain"/>
    <property type="match status" value="1"/>
</dbReference>
<dbReference type="Gene3D" id="3.30.70.1350">
    <property type="entry name" value="Cation efflux protein, cytoplasmic domain"/>
    <property type="match status" value="1"/>
</dbReference>
<dbReference type="HAMAP" id="MF_01425">
    <property type="entry name" value="Cation_efflux_FieF"/>
    <property type="match status" value="1"/>
</dbReference>
<dbReference type="InterPro" id="IPR002524">
    <property type="entry name" value="Cation_efflux"/>
</dbReference>
<dbReference type="InterPro" id="IPR027470">
    <property type="entry name" value="Cation_efflux_CTD"/>
</dbReference>
<dbReference type="InterPro" id="IPR036837">
    <property type="entry name" value="Cation_efflux_CTD_sf"/>
</dbReference>
<dbReference type="InterPro" id="IPR023783">
    <property type="entry name" value="Cation_efflux_FieF"/>
</dbReference>
<dbReference type="InterPro" id="IPR027469">
    <property type="entry name" value="Cation_efflux_TMD_sf"/>
</dbReference>
<dbReference type="InterPro" id="IPR050291">
    <property type="entry name" value="CDF_Transporter"/>
</dbReference>
<dbReference type="NCBIfam" id="TIGR01297">
    <property type="entry name" value="CDF"/>
    <property type="match status" value="1"/>
</dbReference>
<dbReference type="NCBIfam" id="NF007064">
    <property type="entry name" value="PRK09509.1"/>
    <property type="match status" value="1"/>
</dbReference>
<dbReference type="PANTHER" id="PTHR43840:SF41">
    <property type="entry name" value="CATION-EFFLUX PUMP FIEF"/>
    <property type="match status" value="1"/>
</dbReference>
<dbReference type="PANTHER" id="PTHR43840">
    <property type="entry name" value="MITOCHONDRIAL METAL TRANSPORTER 1-RELATED"/>
    <property type="match status" value="1"/>
</dbReference>
<dbReference type="Pfam" id="PF01545">
    <property type="entry name" value="Cation_efflux"/>
    <property type="match status" value="1"/>
</dbReference>
<dbReference type="Pfam" id="PF16916">
    <property type="entry name" value="ZT_dimer"/>
    <property type="match status" value="1"/>
</dbReference>
<dbReference type="SUPFAM" id="SSF160240">
    <property type="entry name" value="Cation efflux protein cytoplasmic domain-like"/>
    <property type="match status" value="1"/>
</dbReference>
<dbReference type="SUPFAM" id="SSF161111">
    <property type="entry name" value="Cation efflux protein transmembrane domain-like"/>
    <property type="match status" value="1"/>
</dbReference>
<reference key="1">
    <citation type="journal article" date="2011" name="J. Bacteriol.">
        <title>Comparative genomics of 28 Salmonella enterica isolates: evidence for CRISPR-mediated adaptive sublineage evolution.</title>
        <authorList>
            <person name="Fricke W.F."/>
            <person name="Mammel M.K."/>
            <person name="McDermott P.F."/>
            <person name="Tartera C."/>
            <person name="White D.G."/>
            <person name="Leclerc J.E."/>
            <person name="Ravel J."/>
            <person name="Cebula T.A."/>
        </authorList>
    </citation>
    <scope>NUCLEOTIDE SEQUENCE [LARGE SCALE GENOMIC DNA]</scope>
    <source>
        <strain>SL483</strain>
    </source>
</reference>